<accession>A4SV71</accession>
<sequence length="389" mass="42988">MLLILAQWLQDDFGFFRVFNYITFRAVMATVTALLIGLAAGPWVIRKLSELKMGQAVRTDGPLTHLVKSGTPTMGGVLILIGIFVSCMLWADLSNRFIWIVMIVTFGFGAVGWVDDYRKVVRKDPKGMASREKFFWQTLIGLFAAIYLAFSVSEINNLKVLELFFEWVKSGFALDLPAKTNLLLPFMKEVSYPLGMMGFIILSYLVIVGSSNAVNLTDGLDGLVIMPVILVGAALGAFAYVMGNAIYAKYLLFPYIPGAGELMIFCGAMGGAGLAFLWYNTHPAQVFMGDVGALALGGALGTIAVIVRQEIVLFVMGGIFVAETVSVMMQVVWFKITKKHFGEGRRIFRMAPLHHHFELGGWKETQVVVRFWIITILLVLIGLSSLKLR</sequence>
<gene>
    <name evidence="1" type="primary">mraY</name>
    <name type="ordered locus">Pnuc_0164</name>
</gene>
<keyword id="KW-0131">Cell cycle</keyword>
<keyword id="KW-0132">Cell division</keyword>
<keyword id="KW-0997">Cell inner membrane</keyword>
<keyword id="KW-1003">Cell membrane</keyword>
<keyword id="KW-0133">Cell shape</keyword>
<keyword id="KW-0961">Cell wall biogenesis/degradation</keyword>
<keyword id="KW-0460">Magnesium</keyword>
<keyword id="KW-0472">Membrane</keyword>
<keyword id="KW-0479">Metal-binding</keyword>
<keyword id="KW-0573">Peptidoglycan synthesis</keyword>
<keyword id="KW-1185">Reference proteome</keyword>
<keyword id="KW-0808">Transferase</keyword>
<keyword id="KW-0812">Transmembrane</keyword>
<keyword id="KW-1133">Transmembrane helix</keyword>
<comment type="function">
    <text evidence="1">Catalyzes the initial step of the lipid cycle reactions in the biosynthesis of the cell wall peptidoglycan: transfers peptidoglycan precursor phospho-MurNAc-pentapeptide from UDP-MurNAc-pentapeptide onto the lipid carrier undecaprenyl phosphate, yielding undecaprenyl-pyrophosphoryl-MurNAc-pentapeptide, known as lipid I.</text>
</comment>
<comment type="catalytic activity">
    <reaction evidence="1">
        <text>UDP-N-acetyl-alpha-D-muramoyl-L-alanyl-gamma-D-glutamyl-meso-2,6-diaminopimeloyl-D-alanyl-D-alanine + di-trans,octa-cis-undecaprenyl phosphate = di-trans,octa-cis-undecaprenyl diphospho-N-acetyl-alpha-D-muramoyl-L-alanyl-D-glutamyl-meso-2,6-diaminopimeloyl-D-alanyl-D-alanine + UMP</text>
        <dbReference type="Rhea" id="RHEA:28386"/>
        <dbReference type="ChEBI" id="CHEBI:57865"/>
        <dbReference type="ChEBI" id="CHEBI:60392"/>
        <dbReference type="ChEBI" id="CHEBI:61386"/>
        <dbReference type="ChEBI" id="CHEBI:61387"/>
        <dbReference type="EC" id="2.7.8.13"/>
    </reaction>
</comment>
<comment type="cofactor">
    <cofactor evidence="1">
        <name>Mg(2+)</name>
        <dbReference type="ChEBI" id="CHEBI:18420"/>
    </cofactor>
</comment>
<comment type="pathway">
    <text evidence="1">Cell wall biogenesis; peptidoglycan biosynthesis.</text>
</comment>
<comment type="subcellular location">
    <subcellularLocation>
        <location evidence="1">Cell inner membrane</location>
        <topology evidence="1">Multi-pass membrane protein</topology>
    </subcellularLocation>
</comment>
<comment type="similarity">
    <text evidence="1">Belongs to the glycosyltransferase 4 family. MraY subfamily.</text>
</comment>
<name>MRAY_POLAQ</name>
<reference key="1">
    <citation type="journal article" date="2012" name="Stand. Genomic Sci.">
        <title>Complete genome sequence of Polynucleobacter necessarius subsp. asymbioticus type strain (QLW-P1DMWA-1(T)).</title>
        <authorList>
            <person name="Meincke L."/>
            <person name="Copeland A."/>
            <person name="Lapidus A."/>
            <person name="Lucas S."/>
            <person name="Berry K.W."/>
            <person name="Del Rio T.G."/>
            <person name="Hammon N."/>
            <person name="Dalin E."/>
            <person name="Tice H."/>
            <person name="Pitluck S."/>
            <person name="Richardson P."/>
            <person name="Bruce D."/>
            <person name="Goodwin L."/>
            <person name="Han C."/>
            <person name="Tapia R."/>
            <person name="Detter J.C."/>
            <person name="Schmutz J."/>
            <person name="Brettin T."/>
            <person name="Larimer F."/>
            <person name="Land M."/>
            <person name="Hauser L."/>
            <person name="Kyrpides N.C."/>
            <person name="Ivanova N."/>
            <person name="Goker M."/>
            <person name="Woyke T."/>
            <person name="Wu Q.L."/>
            <person name="Pockl M."/>
            <person name="Hahn M.W."/>
            <person name="Klenk H.P."/>
        </authorList>
    </citation>
    <scope>NUCLEOTIDE SEQUENCE [LARGE SCALE GENOMIC DNA]</scope>
    <source>
        <strain>DSM 18221 / CIP 109841 / QLW-P1DMWA-1</strain>
    </source>
</reference>
<organism>
    <name type="scientific">Polynucleobacter asymbioticus (strain DSM 18221 / CIP 109841 / QLW-P1DMWA-1)</name>
    <name type="common">Polynucleobacter necessarius subsp. asymbioticus</name>
    <dbReference type="NCBI Taxonomy" id="312153"/>
    <lineage>
        <taxon>Bacteria</taxon>
        <taxon>Pseudomonadati</taxon>
        <taxon>Pseudomonadota</taxon>
        <taxon>Betaproteobacteria</taxon>
        <taxon>Burkholderiales</taxon>
        <taxon>Burkholderiaceae</taxon>
        <taxon>Polynucleobacter</taxon>
    </lineage>
</organism>
<dbReference type="EC" id="2.7.8.13" evidence="1"/>
<dbReference type="EMBL" id="CP000655">
    <property type="protein sequence ID" value="ABP33385.1"/>
    <property type="molecule type" value="Genomic_DNA"/>
</dbReference>
<dbReference type="RefSeq" id="WP_011902010.1">
    <property type="nucleotide sequence ID" value="NC_009379.1"/>
</dbReference>
<dbReference type="SMR" id="A4SV71"/>
<dbReference type="GeneID" id="31480513"/>
<dbReference type="KEGG" id="pnu:Pnuc_0164"/>
<dbReference type="eggNOG" id="COG0472">
    <property type="taxonomic scope" value="Bacteria"/>
</dbReference>
<dbReference type="HOGENOM" id="CLU_023982_0_0_4"/>
<dbReference type="UniPathway" id="UPA00219"/>
<dbReference type="Proteomes" id="UP000000231">
    <property type="component" value="Chromosome"/>
</dbReference>
<dbReference type="GO" id="GO:0005886">
    <property type="term" value="C:plasma membrane"/>
    <property type="evidence" value="ECO:0007669"/>
    <property type="project" value="UniProtKB-SubCell"/>
</dbReference>
<dbReference type="GO" id="GO:0046872">
    <property type="term" value="F:metal ion binding"/>
    <property type="evidence" value="ECO:0007669"/>
    <property type="project" value="UniProtKB-KW"/>
</dbReference>
<dbReference type="GO" id="GO:0008963">
    <property type="term" value="F:phospho-N-acetylmuramoyl-pentapeptide-transferase activity"/>
    <property type="evidence" value="ECO:0007669"/>
    <property type="project" value="UniProtKB-UniRule"/>
</dbReference>
<dbReference type="GO" id="GO:0051992">
    <property type="term" value="F:UDP-N-acetylmuramoyl-L-alanyl-D-glutamyl-meso-2,6-diaminopimelyl-D-alanyl-D-alanine:undecaprenyl-phosphate transferase activity"/>
    <property type="evidence" value="ECO:0007669"/>
    <property type="project" value="RHEA"/>
</dbReference>
<dbReference type="GO" id="GO:0051301">
    <property type="term" value="P:cell division"/>
    <property type="evidence" value="ECO:0007669"/>
    <property type="project" value="UniProtKB-KW"/>
</dbReference>
<dbReference type="GO" id="GO:0071555">
    <property type="term" value="P:cell wall organization"/>
    <property type="evidence" value="ECO:0007669"/>
    <property type="project" value="UniProtKB-KW"/>
</dbReference>
<dbReference type="GO" id="GO:0009252">
    <property type="term" value="P:peptidoglycan biosynthetic process"/>
    <property type="evidence" value="ECO:0007669"/>
    <property type="project" value="UniProtKB-UniRule"/>
</dbReference>
<dbReference type="GO" id="GO:0008360">
    <property type="term" value="P:regulation of cell shape"/>
    <property type="evidence" value="ECO:0007669"/>
    <property type="project" value="UniProtKB-KW"/>
</dbReference>
<dbReference type="CDD" id="cd06852">
    <property type="entry name" value="GT_MraY"/>
    <property type="match status" value="1"/>
</dbReference>
<dbReference type="HAMAP" id="MF_00038">
    <property type="entry name" value="MraY"/>
    <property type="match status" value="1"/>
</dbReference>
<dbReference type="InterPro" id="IPR000715">
    <property type="entry name" value="Glycosyl_transferase_4"/>
</dbReference>
<dbReference type="InterPro" id="IPR003524">
    <property type="entry name" value="PNAcMuramoyl-5peptid_Trfase"/>
</dbReference>
<dbReference type="InterPro" id="IPR018480">
    <property type="entry name" value="PNAcMuramoyl-5peptid_Trfase_CS"/>
</dbReference>
<dbReference type="NCBIfam" id="TIGR00445">
    <property type="entry name" value="mraY"/>
    <property type="match status" value="1"/>
</dbReference>
<dbReference type="PANTHER" id="PTHR22926">
    <property type="entry name" value="PHOSPHO-N-ACETYLMURAMOYL-PENTAPEPTIDE-TRANSFERASE"/>
    <property type="match status" value="1"/>
</dbReference>
<dbReference type="PANTHER" id="PTHR22926:SF5">
    <property type="entry name" value="PHOSPHO-N-ACETYLMURAMOYL-PENTAPEPTIDE-TRANSFERASE HOMOLOG"/>
    <property type="match status" value="1"/>
</dbReference>
<dbReference type="Pfam" id="PF00953">
    <property type="entry name" value="Glycos_transf_4"/>
    <property type="match status" value="1"/>
</dbReference>
<dbReference type="Pfam" id="PF10555">
    <property type="entry name" value="MraY_sig1"/>
    <property type="match status" value="1"/>
</dbReference>
<dbReference type="PROSITE" id="PS01347">
    <property type="entry name" value="MRAY_1"/>
    <property type="match status" value="1"/>
</dbReference>
<dbReference type="PROSITE" id="PS01348">
    <property type="entry name" value="MRAY_2"/>
    <property type="match status" value="1"/>
</dbReference>
<evidence type="ECO:0000255" key="1">
    <source>
        <dbReference type="HAMAP-Rule" id="MF_00038"/>
    </source>
</evidence>
<feature type="chain" id="PRO_1000074551" description="Phospho-N-acetylmuramoyl-pentapeptide-transferase">
    <location>
        <begin position="1"/>
        <end position="389"/>
    </location>
</feature>
<feature type="transmembrane region" description="Helical" evidence="1">
    <location>
        <begin position="25"/>
        <end position="45"/>
    </location>
</feature>
<feature type="transmembrane region" description="Helical" evidence="1">
    <location>
        <begin position="73"/>
        <end position="93"/>
    </location>
</feature>
<feature type="transmembrane region" description="Helical" evidence="1">
    <location>
        <begin position="97"/>
        <end position="117"/>
    </location>
</feature>
<feature type="transmembrane region" description="Helical" evidence="1">
    <location>
        <begin position="135"/>
        <end position="155"/>
    </location>
</feature>
<feature type="transmembrane region" description="Helical" evidence="1">
    <location>
        <begin position="190"/>
        <end position="210"/>
    </location>
</feature>
<feature type="transmembrane region" description="Helical" evidence="1">
    <location>
        <begin position="222"/>
        <end position="242"/>
    </location>
</feature>
<feature type="transmembrane region" description="Helical" evidence="1">
    <location>
        <begin position="258"/>
        <end position="278"/>
    </location>
</feature>
<feature type="transmembrane region" description="Helical" evidence="1">
    <location>
        <begin position="286"/>
        <end position="306"/>
    </location>
</feature>
<feature type="transmembrane region" description="Helical" evidence="1">
    <location>
        <begin position="311"/>
        <end position="331"/>
    </location>
</feature>
<feature type="transmembrane region" description="Helical" evidence="1">
    <location>
        <begin position="366"/>
        <end position="386"/>
    </location>
</feature>
<protein>
    <recommendedName>
        <fullName evidence="1">Phospho-N-acetylmuramoyl-pentapeptide-transferase</fullName>
        <ecNumber evidence="1">2.7.8.13</ecNumber>
    </recommendedName>
    <alternativeName>
        <fullName evidence="1">UDP-MurNAc-pentapeptide phosphotransferase</fullName>
    </alternativeName>
</protein>
<proteinExistence type="inferred from homology"/>